<keyword id="KW-0066">ATP synthesis</keyword>
<keyword id="KW-0997">Cell inner membrane</keyword>
<keyword id="KW-1003">Cell membrane</keyword>
<keyword id="KW-0138">CF(0)</keyword>
<keyword id="KW-0375">Hydrogen ion transport</keyword>
<keyword id="KW-0406">Ion transport</keyword>
<keyword id="KW-0472">Membrane</keyword>
<keyword id="KW-1185">Reference proteome</keyword>
<keyword id="KW-0812">Transmembrane</keyword>
<keyword id="KW-1133">Transmembrane helix</keyword>
<keyword id="KW-0813">Transport</keyword>
<protein>
    <recommendedName>
        <fullName evidence="1">ATP synthase subunit b</fullName>
    </recommendedName>
    <alternativeName>
        <fullName evidence="1">ATP synthase F(0) sector subunit b</fullName>
    </alternativeName>
    <alternativeName>
        <fullName evidence="1">ATPase subunit I</fullName>
    </alternativeName>
    <alternativeName>
        <fullName evidence="1">F-type ATPase subunit b</fullName>
        <shortName evidence="1">F-ATPase subunit b</shortName>
    </alternativeName>
</protein>
<proteinExistence type="inferred from homology"/>
<accession>Q5P4E6</accession>
<dbReference type="EMBL" id="CR555306">
    <property type="protein sequence ID" value="CAI07817.1"/>
    <property type="molecule type" value="Genomic_DNA"/>
</dbReference>
<dbReference type="RefSeq" id="WP_011237531.1">
    <property type="nucleotide sequence ID" value="NC_006513.1"/>
</dbReference>
<dbReference type="SMR" id="Q5P4E6"/>
<dbReference type="STRING" id="76114.ebA3002"/>
<dbReference type="KEGG" id="eba:ebA3002"/>
<dbReference type="eggNOG" id="COG0711">
    <property type="taxonomic scope" value="Bacteria"/>
</dbReference>
<dbReference type="HOGENOM" id="CLU_079215_4_5_4"/>
<dbReference type="OrthoDB" id="9788020at2"/>
<dbReference type="Proteomes" id="UP000006552">
    <property type="component" value="Chromosome"/>
</dbReference>
<dbReference type="GO" id="GO:0005886">
    <property type="term" value="C:plasma membrane"/>
    <property type="evidence" value="ECO:0007669"/>
    <property type="project" value="UniProtKB-SubCell"/>
</dbReference>
<dbReference type="GO" id="GO:0045259">
    <property type="term" value="C:proton-transporting ATP synthase complex"/>
    <property type="evidence" value="ECO:0007669"/>
    <property type="project" value="UniProtKB-KW"/>
</dbReference>
<dbReference type="GO" id="GO:0046933">
    <property type="term" value="F:proton-transporting ATP synthase activity, rotational mechanism"/>
    <property type="evidence" value="ECO:0007669"/>
    <property type="project" value="UniProtKB-UniRule"/>
</dbReference>
<dbReference type="GO" id="GO:0046961">
    <property type="term" value="F:proton-transporting ATPase activity, rotational mechanism"/>
    <property type="evidence" value="ECO:0007669"/>
    <property type="project" value="TreeGrafter"/>
</dbReference>
<dbReference type="CDD" id="cd06503">
    <property type="entry name" value="ATP-synt_Fo_b"/>
    <property type="match status" value="1"/>
</dbReference>
<dbReference type="Gene3D" id="6.10.250.1580">
    <property type="match status" value="1"/>
</dbReference>
<dbReference type="HAMAP" id="MF_01398">
    <property type="entry name" value="ATP_synth_b_bprime"/>
    <property type="match status" value="1"/>
</dbReference>
<dbReference type="InterPro" id="IPR002146">
    <property type="entry name" value="ATP_synth_b/b'su_bac/chlpt"/>
</dbReference>
<dbReference type="InterPro" id="IPR005864">
    <property type="entry name" value="ATP_synth_F0_bsu_bac"/>
</dbReference>
<dbReference type="InterPro" id="IPR050059">
    <property type="entry name" value="ATP_synthase_B_chain"/>
</dbReference>
<dbReference type="NCBIfam" id="TIGR01144">
    <property type="entry name" value="ATP_synt_b"/>
    <property type="match status" value="1"/>
</dbReference>
<dbReference type="NCBIfam" id="NF004411">
    <property type="entry name" value="PRK05759.1-2"/>
    <property type="match status" value="1"/>
</dbReference>
<dbReference type="PANTHER" id="PTHR33445:SF1">
    <property type="entry name" value="ATP SYNTHASE SUBUNIT B"/>
    <property type="match status" value="1"/>
</dbReference>
<dbReference type="PANTHER" id="PTHR33445">
    <property type="entry name" value="ATP SYNTHASE SUBUNIT B', CHLOROPLASTIC"/>
    <property type="match status" value="1"/>
</dbReference>
<dbReference type="Pfam" id="PF00430">
    <property type="entry name" value="ATP-synt_B"/>
    <property type="match status" value="1"/>
</dbReference>
<organism>
    <name type="scientific">Aromatoleum aromaticum (strain DSM 19018 / LMG 30748 / EbN1)</name>
    <name type="common">Azoarcus sp. (strain EbN1)</name>
    <dbReference type="NCBI Taxonomy" id="76114"/>
    <lineage>
        <taxon>Bacteria</taxon>
        <taxon>Pseudomonadati</taxon>
        <taxon>Pseudomonadota</taxon>
        <taxon>Betaproteobacteria</taxon>
        <taxon>Rhodocyclales</taxon>
        <taxon>Rhodocyclaceae</taxon>
        <taxon>Aromatoleum</taxon>
    </lineage>
</organism>
<feature type="chain" id="PRO_0000368318" description="ATP synthase subunit b">
    <location>
        <begin position="1"/>
        <end position="157"/>
    </location>
</feature>
<feature type="transmembrane region" description="Helical" evidence="1">
    <location>
        <begin position="7"/>
        <end position="27"/>
    </location>
</feature>
<sequence length="157" mass="16991">MNLNATLIAQLVVFFILAWVTMKFVWPPIVKALDERAKKIADGLAAADKAKADLSLAEKKVVDELRKARESAGDVRASAEKQAAKFLDDARAEAARIIAQAREAAEAEAGTAAQRAKEALRDQVAHLAVAGAEKILRREINAQVHADLLANLKTELQ</sequence>
<evidence type="ECO:0000255" key="1">
    <source>
        <dbReference type="HAMAP-Rule" id="MF_01398"/>
    </source>
</evidence>
<name>ATPF_AROAE</name>
<gene>
    <name evidence="1" type="primary">atpF</name>
    <name type="ordered locus">AZOSEA16920</name>
    <name type="ORF">ebA3002</name>
</gene>
<reference key="1">
    <citation type="journal article" date="2005" name="Arch. Microbiol.">
        <title>The genome sequence of an anaerobic aromatic-degrading denitrifying bacterium, strain EbN1.</title>
        <authorList>
            <person name="Rabus R."/>
            <person name="Kube M."/>
            <person name="Heider J."/>
            <person name="Beck A."/>
            <person name="Heitmann K."/>
            <person name="Widdel F."/>
            <person name="Reinhardt R."/>
        </authorList>
    </citation>
    <scope>NUCLEOTIDE SEQUENCE [LARGE SCALE GENOMIC DNA]</scope>
    <source>
        <strain>DSM 19018 / LMG 30748 / EbN1</strain>
    </source>
</reference>
<comment type="function">
    <text evidence="1">F(1)F(0) ATP synthase produces ATP from ADP in the presence of a proton or sodium gradient. F-type ATPases consist of two structural domains, F(1) containing the extramembraneous catalytic core and F(0) containing the membrane proton channel, linked together by a central stalk and a peripheral stalk. During catalysis, ATP synthesis in the catalytic domain of F(1) is coupled via a rotary mechanism of the central stalk subunits to proton translocation.</text>
</comment>
<comment type="function">
    <text evidence="1">Component of the F(0) channel, it forms part of the peripheral stalk, linking F(1) to F(0).</text>
</comment>
<comment type="subunit">
    <text evidence="1">F-type ATPases have 2 components, F(1) - the catalytic core - and F(0) - the membrane proton channel. F(1) has five subunits: alpha(3), beta(3), gamma(1), delta(1), epsilon(1). F(0) has three main subunits: a(1), b(2) and c(10-14). The alpha and beta chains form an alternating ring which encloses part of the gamma chain. F(1) is attached to F(0) by a central stalk formed by the gamma and epsilon chains, while a peripheral stalk is formed by the delta and b chains.</text>
</comment>
<comment type="subcellular location">
    <subcellularLocation>
        <location evidence="1">Cell inner membrane</location>
        <topology evidence="1">Single-pass membrane protein</topology>
    </subcellularLocation>
</comment>
<comment type="similarity">
    <text evidence="1">Belongs to the ATPase B chain family.</text>
</comment>